<accession>A1AX14</accession>
<organism>
    <name type="scientific">Ruthia magnifica subsp. Calyptogena magnifica</name>
    <dbReference type="NCBI Taxonomy" id="413404"/>
    <lineage>
        <taxon>Bacteria</taxon>
        <taxon>Pseudomonadati</taxon>
        <taxon>Pseudomonadota</taxon>
        <taxon>Gammaproteobacteria</taxon>
        <taxon>Candidatus Pseudothioglobaceae</taxon>
        <taxon>Candidatus Ruthturnera</taxon>
    </lineage>
</organism>
<protein>
    <recommendedName>
        <fullName evidence="1">tRNA-2-methylthio-N(6)-dimethylallyladenosine synthase</fullName>
        <ecNumber evidence="1">2.8.4.3</ecNumber>
    </recommendedName>
    <alternativeName>
        <fullName evidence="1">(Dimethylallyl)adenosine tRNA methylthiotransferase MiaB</fullName>
    </alternativeName>
    <alternativeName>
        <fullName evidence="1">tRNA-i(6)A37 methylthiotransferase</fullName>
    </alternativeName>
</protein>
<reference key="1">
    <citation type="journal article" date="2007" name="Science">
        <title>The Calyptogena magnifica chemoautotrophic symbiont genome.</title>
        <authorList>
            <person name="Newton I.L.G."/>
            <person name="Woyke T."/>
            <person name="Auchtung T.A."/>
            <person name="Dilly G.F."/>
            <person name="Dutton R.J."/>
            <person name="Fisher M.C."/>
            <person name="Fontanez K.M."/>
            <person name="Lau E."/>
            <person name="Stewart F.J."/>
            <person name="Richardson P.M."/>
            <person name="Barry K.W."/>
            <person name="Saunders E."/>
            <person name="Detter J.C."/>
            <person name="Wu D."/>
            <person name="Eisen J.A."/>
            <person name="Cavanaugh C.M."/>
        </authorList>
    </citation>
    <scope>NUCLEOTIDE SEQUENCE [LARGE SCALE GENOMIC DNA]</scope>
</reference>
<name>MIAB_RUTMC</name>
<sequence length="444" mass="49747">MKKLYIRTFGCQMNEYDSNKIADVLNHSHGLVLTDDAASANVLLLNTCSIREKAQEKLFHQLGRWRKLKDKNSNLIIGVGGCVASQEGELILERAPYVDIIFGPQTLHRLPSMLNEVLTPTPGMSVKPSIDISFPEIEKFDHLPKPKTSSVTAFVSIMEGCSKYCTFCIVPYTRGEEVSRPFIDVINEVKILAIQGVREVNLLGQNVNAYQGLMDDGEIADLALLINIAAQIDGIKRIRYTTSHPTQFSDSLIEAYMEVPKLASHLHLPIQSGSDKILRLMKRGHMVIEYKSKIRKLRKIRPDISISSDFIIGFPGENEQDFLDTMTLIDEIGFDKSFSFIYSARPGTLASSYLDDVDMDVKKQRLALVQKTIDKNTERISKSMVGSVQKILVENVAKKRDNLFGRTENMRNTHFKGDKSLIGQIVNIKITQGRGNSLVGNLIA</sequence>
<evidence type="ECO:0000255" key="1">
    <source>
        <dbReference type="HAMAP-Rule" id="MF_01864"/>
    </source>
</evidence>
<evidence type="ECO:0000255" key="2">
    <source>
        <dbReference type="PROSITE-ProRule" id="PRU01266"/>
    </source>
</evidence>
<comment type="function">
    <text evidence="1">Catalyzes the methylthiolation of N6-(dimethylallyl)adenosine (i(6)A), leading to the formation of 2-methylthio-N6-(dimethylallyl)adenosine (ms(2)i(6)A) at position 37 in tRNAs that read codons beginning with uridine.</text>
</comment>
<comment type="catalytic activity">
    <reaction evidence="1">
        <text>N(6)-dimethylallyladenosine(37) in tRNA + (sulfur carrier)-SH + AH2 + 2 S-adenosyl-L-methionine = 2-methylsulfanyl-N(6)-dimethylallyladenosine(37) in tRNA + (sulfur carrier)-H + 5'-deoxyadenosine + L-methionine + A + S-adenosyl-L-homocysteine + 2 H(+)</text>
        <dbReference type="Rhea" id="RHEA:37067"/>
        <dbReference type="Rhea" id="RHEA-COMP:10375"/>
        <dbReference type="Rhea" id="RHEA-COMP:10376"/>
        <dbReference type="Rhea" id="RHEA-COMP:14737"/>
        <dbReference type="Rhea" id="RHEA-COMP:14739"/>
        <dbReference type="ChEBI" id="CHEBI:13193"/>
        <dbReference type="ChEBI" id="CHEBI:15378"/>
        <dbReference type="ChEBI" id="CHEBI:17319"/>
        <dbReference type="ChEBI" id="CHEBI:17499"/>
        <dbReference type="ChEBI" id="CHEBI:29917"/>
        <dbReference type="ChEBI" id="CHEBI:57844"/>
        <dbReference type="ChEBI" id="CHEBI:57856"/>
        <dbReference type="ChEBI" id="CHEBI:59789"/>
        <dbReference type="ChEBI" id="CHEBI:64428"/>
        <dbReference type="ChEBI" id="CHEBI:74415"/>
        <dbReference type="ChEBI" id="CHEBI:74417"/>
        <dbReference type="EC" id="2.8.4.3"/>
    </reaction>
</comment>
<comment type="cofactor">
    <cofactor evidence="1">
        <name>[4Fe-4S] cluster</name>
        <dbReference type="ChEBI" id="CHEBI:49883"/>
    </cofactor>
    <text evidence="1">Binds 2 [4Fe-4S] clusters. One cluster is coordinated with 3 cysteines and an exchangeable S-adenosyl-L-methionine.</text>
</comment>
<comment type="subunit">
    <text evidence="1">Monomer.</text>
</comment>
<comment type="subcellular location">
    <subcellularLocation>
        <location evidence="1">Cytoplasm</location>
    </subcellularLocation>
</comment>
<comment type="similarity">
    <text evidence="1">Belongs to the methylthiotransferase family. MiaB subfamily.</text>
</comment>
<dbReference type="EC" id="2.8.4.3" evidence="1"/>
<dbReference type="EMBL" id="CP000488">
    <property type="protein sequence ID" value="ABL02471.1"/>
    <property type="molecule type" value="Genomic_DNA"/>
</dbReference>
<dbReference type="RefSeq" id="WP_011738096.1">
    <property type="nucleotide sequence ID" value="NC_008610.1"/>
</dbReference>
<dbReference type="SMR" id="A1AX14"/>
<dbReference type="STRING" id="413404.Rmag_0743"/>
<dbReference type="KEGG" id="rma:Rmag_0743"/>
<dbReference type="eggNOG" id="COG0621">
    <property type="taxonomic scope" value="Bacteria"/>
</dbReference>
<dbReference type="HOGENOM" id="CLU_018697_2_2_6"/>
<dbReference type="OrthoDB" id="9805215at2"/>
<dbReference type="Proteomes" id="UP000002587">
    <property type="component" value="Chromosome"/>
</dbReference>
<dbReference type="GO" id="GO:0005829">
    <property type="term" value="C:cytosol"/>
    <property type="evidence" value="ECO:0007669"/>
    <property type="project" value="TreeGrafter"/>
</dbReference>
<dbReference type="GO" id="GO:0051539">
    <property type="term" value="F:4 iron, 4 sulfur cluster binding"/>
    <property type="evidence" value="ECO:0007669"/>
    <property type="project" value="UniProtKB-UniRule"/>
</dbReference>
<dbReference type="GO" id="GO:0046872">
    <property type="term" value="F:metal ion binding"/>
    <property type="evidence" value="ECO:0007669"/>
    <property type="project" value="UniProtKB-KW"/>
</dbReference>
<dbReference type="GO" id="GO:0035597">
    <property type="term" value="F:N6-isopentenyladenosine methylthiotransferase activity"/>
    <property type="evidence" value="ECO:0007669"/>
    <property type="project" value="TreeGrafter"/>
</dbReference>
<dbReference type="CDD" id="cd01335">
    <property type="entry name" value="Radical_SAM"/>
    <property type="match status" value="1"/>
</dbReference>
<dbReference type="FunFam" id="3.40.50.12160:FF:000001">
    <property type="entry name" value="tRNA-2-methylthio-N(6)-dimethylallyladenosine synthase"/>
    <property type="match status" value="1"/>
</dbReference>
<dbReference type="FunFam" id="3.80.30.20:FF:000001">
    <property type="entry name" value="tRNA-2-methylthio-N(6)-dimethylallyladenosine synthase 2"/>
    <property type="match status" value="1"/>
</dbReference>
<dbReference type="Gene3D" id="3.40.50.12160">
    <property type="entry name" value="Methylthiotransferase, N-terminal domain"/>
    <property type="match status" value="1"/>
</dbReference>
<dbReference type="Gene3D" id="3.80.30.20">
    <property type="entry name" value="tm_1862 like domain"/>
    <property type="match status" value="1"/>
</dbReference>
<dbReference type="HAMAP" id="MF_01864">
    <property type="entry name" value="tRNA_metthiotr_MiaB"/>
    <property type="match status" value="1"/>
</dbReference>
<dbReference type="InterPro" id="IPR006638">
    <property type="entry name" value="Elp3/MiaA/NifB-like_rSAM"/>
</dbReference>
<dbReference type="InterPro" id="IPR005839">
    <property type="entry name" value="Methylthiotransferase"/>
</dbReference>
<dbReference type="InterPro" id="IPR020612">
    <property type="entry name" value="Methylthiotransferase_CS"/>
</dbReference>
<dbReference type="InterPro" id="IPR013848">
    <property type="entry name" value="Methylthiotransferase_N"/>
</dbReference>
<dbReference type="InterPro" id="IPR038135">
    <property type="entry name" value="Methylthiotransferase_N_sf"/>
</dbReference>
<dbReference type="InterPro" id="IPR006463">
    <property type="entry name" value="MiaB_methiolase"/>
</dbReference>
<dbReference type="InterPro" id="IPR007197">
    <property type="entry name" value="rSAM"/>
</dbReference>
<dbReference type="InterPro" id="IPR023404">
    <property type="entry name" value="rSAM_horseshoe"/>
</dbReference>
<dbReference type="InterPro" id="IPR002792">
    <property type="entry name" value="TRAM_dom"/>
</dbReference>
<dbReference type="NCBIfam" id="TIGR01574">
    <property type="entry name" value="miaB-methiolase"/>
    <property type="match status" value="1"/>
</dbReference>
<dbReference type="NCBIfam" id="TIGR00089">
    <property type="entry name" value="MiaB/RimO family radical SAM methylthiotransferase"/>
    <property type="match status" value="1"/>
</dbReference>
<dbReference type="PANTHER" id="PTHR43020">
    <property type="entry name" value="CDK5 REGULATORY SUBUNIT-ASSOCIATED PROTEIN 1"/>
    <property type="match status" value="1"/>
</dbReference>
<dbReference type="PANTHER" id="PTHR43020:SF2">
    <property type="entry name" value="MITOCHONDRIAL TRNA METHYLTHIOTRANSFERASE CDK5RAP1"/>
    <property type="match status" value="1"/>
</dbReference>
<dbReference type="Pfam" id="PF04055">
    <property type="entry name" value="Radical_SAM"/>
    <property type="match status" value="1"/>
</dbReference>
<dbReference type="Pfam" id="PF01938">
    <property type="entry name" value="TRAM"/>
    <property type="match status" value="1"/>
</dbReference>
<dbReference type="Pfam" id="PF00919">
    <property type="entry name" value="UPF0004"/>
    <property type="match status" value="1"/>
</dbReference>
<dbReference type="SFLD" id="SFLDF00273">
    <property type="entry name" value="(dimethylallyl)adenosine_tRNA"/>
    <property type="match status" value="1"/>
</dbReference>
<dbReference type="SFLD" id="SFLDG01082">
    <property type="entry name" value="B12-binding_domain_containing"/>
    <property type="match status" value="1"/>
</dbReference>
<dbReference type="SFLD" id="SFLDG01061">
    <property type="entry name" value="methylthiotransferase"/>
    <property type="match status" value="1"/>
</dbReference>
<dbReference type="SMART" id="SM00729">
    <property type="entry name" value="Elp3"/>
    <property type="match status" value="1"/>
</dbReference>
<dbReference type="SUPFAM" id="SSF102114">
    <property type="entry name" value="Radical SAM enzymes"/>
    <property type="match status" value="1"/>
</dbReference>
<dbReference type="PROSITE" id="PS51449">
    <property type="entry name" value="MTTASE_N"/>
    <property type="match status" value="1"/>
</dbReference>
<dbReference type="PROSITE" id="PS01278">
    <property type="entry name" value="MTTASE_RADICAL"/>
    <property type="match status" value="1"/>
</dbReference>
<dbReference type="PROSITE" id="PS51918">
    <property type="entry name" value="RADICAL_SAM"/>
    <property type="match status" value="1"/>
</dbReference>
<dbReference type="PROSITE" id="PS50926">
    <property type="entry name" value="TRAM"/>
    <property type="match status" value="1"/>
</dbReference>
<keyword id="KW-0004">4Fe-4S</keyword>
<keyword id="KW-0963">Cytoplasm</keyword>
<keyword id="KW-0408">Iron</keyword>
<keyword id="KW-0411">Iron-sulfur</keyword>
<keyword id="KW-0479">Metal-binding</keyword>
<keyword id="KW-0949">S-adenosyl-L-methionine</keyword>
<keyword id="KW-0808">Transferase</keyword>
<keyword id="KW-0819">tRNA processing</keyword>
<gene>
    <name evidence="1" type="primary">miaB</name>
    <name type="ordered locus">Rmag_0743</name>
</gene>
<feature type="chain" id="PRO_0000374513" description="tRNA-2-methylthio-N(6)-dimethylallyladenosine synthase">
    <location>
        <begin position="1"/>
        <end position="444"/>
    </location>
</feature>
<feature type="domain" description="MTTase N-terminal" evidence="1">
    <location>
        <begin position="2"/>
        <end position="119"/>
    </location>
</feature>
<feature type="domain" description="Radical SAM core" evidence="2">
    <location>
        <begin position="147"/>
        <end position="379"/>
    </location>
</feature>
<feature type="domain" description="TRAM" evidence="1">
    <location>
        <begin position="382"/>
        <end position="444"/>
    </location>
</feature>
<feature type="binding site" evidence="1">
    <location>
        <position position="11"/>
    </location>
    <ligand>
        <name>[4Fe-4S] cluster</name>
        <dbReference type="ChEBI" id="CHEBI:49883"/>
        <label>1</label>
    </ligand>
</feature>
<feature type="binding site" evidence="1">
    <location>
        <position position="48"/>
    </location>
    <ligand>
        <name>[4Fe-4S] cluster</name>
        <dbReference type="ChEBI" id="CHEBI:49883"/>
        <label>1</label>
    </ligand>
</feature>
<feature type="binding site" evidence="1">
    <location>
        <position position="82"/>
    </location>
    <ligand>
        <name>[4Fe-4S] cluster</name>
        <dbReference type="ChEBI" id="CHEBI:49883"/>
        <label>1</label>
    </ligand>
</feature>
<feature type="binding site" evidence="1">
    <location>
        <position position="161"/>
    </location>
    <ligand>
        <name>[4Fe-4S] cluster</name>
        <dbReference type="ChEBI" id="CHEBI:49883"/>
        <label>2</label>
        <note>4Fe-4S-S-AdoMet</note>
    </ligand>
</feature>
<feature type="binding site" evidence="1">
    <location>
        <position position="165"/>
    </location>
    <ligand>
        <name>[4Fe-4S] cluster</name>
        <dbReference type="ChEBI" id="CHEBI:49883"/>
        <label>2</label>
        <note>4Fe-4S-S-AdoMet</note>
    </ligand>
</feature>
<feature type="binding site" evidence="1">
    <location>
        <position position="168"/>
    </location>
    <ligand>
        <name>[4Fe-4S] cluster</name>
        <dbReference type="ChEBI" id="CHEBI:49883"/>
        <label>2</label>
        <note>4Fe-4S-S-AdoMet</note>
    </ligand>
</feature>
<proteinExistence type="inferred from homology"/>